<reference evidence="4" key="1">
    <citation type="journal article" date="1994" name="J. Biol. Chem.">
        <title>Biodiversity of apidaecin-type peptide antibiotics. Prospects of manipulating the antibacterial spectrum and combating acquired resistance.</title>
        <authorList>
            <person name="Casteels P."/>
            <person name="Romagnolo J."/>
            <person name="Castle M."/>
            <person name="Casteels-Josson K."/>
            <person name="Erdjument-Bromage H."/>
            <person name="Tempst P."/>
        </authorList>
    </citation>
    <scope>PROTEIN SEQUENCE</scope>
    <scope>FUNCTION</scope>
    <scope>SUBCELLULAR LOCATION</scope>
    <scope>INDUCTION</scope>
    <scope>MASS SPECTROMETRY</scope>
    <source>
        <tissue evidence="3">Hemolymph</tissue>
    </source>
</reference>
<keyword id="KW-0044">Antibiotic</keyword>
<keyword id="KW-0929">Antimicrobial</keyword>
<keyword id="KW-0903">Direct protein sequencing</keyword>
<keyword id="KW-0391">Immunity</keyword>
<keyword id="KW-0399">Innate immunity</keyword>
<keyword id="KW-0964">Secreted</keyword>
<organism evidence="3">
    <name type="scientific">Pimpla disparis</name>
    <name type="common">Parasitic wasp</name>
    <name type="synonym">Coccygomimus disparis</name>
    <dbReference type="NCBI Taxonomy" id="495387"/>
    <lineage>
        <taxon>Eukaryota</taxon>
        <taxon>Metazoa</taxon>
        <taxon>Ecdysozoa</taxon>
        <taxon>Arthropoda</taxon>
        <taxon>Hexapoda</taxon>
        <taxon>Insecta</taxon>
        <taxon>Pterygota</taxon>
        <taxon>Neoptera</taxon>
        <taxon>Endopterygota</taxon>
        <taxon>Hymenoptera</taxon>
        <taxon>Apocrita</taxon>
        <taxon>Ichneumonoidea</taxon>
        <taxon>Ichneumonidae</taxon>
        <taxon>Pimplinae</taxon>
        <taxon>Pimplini</taxon>
        <taxon>Pimpla</taxon>
    </lineage>
</organism>
<proteinExistence type="evidence at protein level"/>
<accession>C0HKX9</accession>
<name>APD2_PIMDI</name>
<sequence length="20" mass="2254">GKPNKPRPAPIKPRPPHPRL</sequence>
<dbReference type="GO" id="GO:0005615">
    <property type="term" value="C:extracellular space"/>
    <property type="evidence" value="ECO:0000314"/>
    <property type="project" value="UniProtKB"/>
</dbReference>
<dbReference type="GO" id="GO:0050829">
    <property type="term" value="P:defense response to Gram-negative bacterium"/>
    <property type="evidence" value="ECO:0000314"/>
    <property type="project" value="UniProtKB"/>
</dbReference>
<dbReference type="GO" id="GO:0045087">
    <property type="term" value="P:innate immune response"/>
    <property type="evidence" value="ECO:0007669"/>
    <property type="project" value="UniProtKB-KW"/>
</dbReference>
<evidence type="ECO:0000256" key="1">
    <source>
        <dbReference type="SAM" id="MobiDB-lite"/>
    </source>
</evidence>
<evidence type="ECO:0000269" key="2">
    <source>
    </source>
</evidence>
<evidence type="ECO:0000303" key="3">
    <source>
    </source>
</evidence>
<evidence type="ECO:0000305" key="4"/>
<protein>
    <recommendedName>
        <fullName evidence="3">Apidaecin 2+</fullName>
    </recommendedName>
</protein>
<comment type="function">
    <text evidence="2">Antimicrobial peptide active against many Gram-negative enterobacterial and plant-associated bacterial species. Not active against other bacterial species like H.pylori, P.mirabilis, B.pertussis or N.gonorrhoeae.</text>
</comment>
<comment type="subcellular location">
    <subcellularLocation>
        <location evidence="2">Secreted</location>
    </subcellularLocation>
</comment>
<comment type="induction">
    <text evidence="2">By bacterial infection.</text>
</comment>
<comment type="mass spectrometry" mass="2255.3" method="MALDI" evidence="2"/>
<comment type="similarity">
    <text evidence="4">Belongs to the apidaecin family.</text>
</comment>
<feature type="peptide" id="PRO_0000441350" description="Apidaecin 2+" evidence="2">
    <location>
        <begin position="1"/>
        <end position="20"/>
    </location>
</feature>
<feature type="region of interest" description="Disordered" evidence="1">
    <location>
        <begin position="1"/>
        <end position="20"/>
    </location>
</feature>
<feature type="compositionally biased region" description="Pro residues" evidence="1">
    <location>
        <begin position="1"/>
        <end position="13"/>
    </location>
</feature>